<accession>Q1J391</accession>
<feature type="chain" id="PRO_0000317672" description="Allantoinase">
    <location>
        <begin position="1"/>
        <end position="449"/>
    </location>
</feature>
<feature type="binding site" evidence="1">
    <location>
        <position position="59"/>
    </location>
    <ligand>
        <name>Zn(2+)</name>
        <dbReference type="ChEBI" id="CHEBI:29105"/>
        <label>1</label>
    </ligand>
</feature>
<feature type="binding site" evidence="1">
    <location>
        <position position="61"/>
    </location>
    <ligand>
        <name>Zn(2+)</name>
        <dbReference type="ChEBI" id="CHEBI:29105"/>
        <label>1</label>
    </ligand>
</feature>
<feature type="binding site" description="via carbamate group" evidence="1">
    <location>
        <position position="146"/>
    </location>
    <ligand>
        <name>Zn(2+)</name>
        <dbReference type="ChEBI" id="CHEBI:29105"/>
        <label>1</label>
    </ligand>
</feature>
<feature type="binding site" description="via carbamate group" evidence="1">
    <location>
        <position position="146"/>
    </location>
    <ligand>
        <name>Zn(2+)</name>
        <dbReference type="ChEBI" id="CHEBI:29105"/>
        <label>2</label>
    </ligand>
</feature>
<feature type="binding site" evidence="1">
    <location>
        <position position="182"/>
    </location>
    <ligand>
        <name>Zn(2+)</name>
        <dbReference type="ChEBI" id="CHEBI:29105"/>
        <label>2</label>
    </ligand>
</feature>
<feature type="binding site" evidence="1">
    <location>
        <position position="238"/>
    </location>
    <ligand>
        <name>Zn(2+)</name>
        <dbReference type="ChEBI" id="CHEBI:29105"/>
        <label>2</label>
    </ligand>
</feature>
<feature type="binding site" evidence="1">
    <location>
        <position position="311"/>
    </location>
    <ligand>
        <name>Zn(2+)</name>
        <dbReference type="ChEBI" id="CHEBI:29105"/>
        <label>1</label>
    </ligand>
</feature>
<feature type="modified residue" description="N6-carboxylysine" evidence="1">
    <location>
        <position position="146"/>
    </location>
</feature>
<keyword id="KW-0378">Hydrolase</keyword>
<keyword id="KW-0479">Metal-binding</keyword>
<keyword id="KW-0614">Plasmid</keyword>
<keyword id="KW-0659">Purine metabolism</keyword>
<keyword id="KW-0862">Zinc</keyword>
<name>ALLB_DEIGD</name>
<reference key="1">
    <citation type="submission" date="2006-04" db="EMBL/GenBank/DDBJ databases">
        <title>Complete sequence of plasmid 1 of Deinococcus geothermalis DSM 11300.</title>
        <authorList>
            <person name="Copeland A."/>
            <person name="Lucas S."/>
            <person name="Lapidus A."/>
            <person name="Barry K."/>
            <person name="Detter J.C."/>
            <person name="Glavina del Rio T."/>
            <person name="Hammon N."/>
            <person name="Israni S."/>
            <person name="Dalin E."/>
            <person name="Tice H."/>
            <person name="Pitluck S."/>
            <person name="Brettin T."/>
            <person name="Bruce D."/>
            <person name="Han C."/>
            <person name="Tapia R."/>
            <person name="Saunders E."/>
            <person name="Gilna P."/>
            <person name="Schmutz J."/>
            <person name="Larimer F."/>
            <person name="Land M."/>
            <person name="Hauser L."/>
            <person name="Kyrpides N."/>
            <person name="Kim E."/>
            <person name="Daly M.J."/>
            <person name="Fredrickson J.K."/>
            <person name="Makarova K.S."/>
            <person name="Gaidamakova E.K."/>
            <person name="Zhai M."/>
            <person name="Richardson P."/>
        </authorList>
    </citation>
    <scope>NUCLEOTIDE SEQUENCE [LARGE SCALE GENOMIC DNA]</scope>
    <source>
        <strain>DSM 11300 / CIP 105573 / AG-3a</strain>
    </source>
</reference>
<gene>
    <name evidence="1" type="primary">allB</name>
    <name type="ordered locus">Dgeo_2609</name>
</gene>
<comment type="function">
    <text evidence="1">Catalyzes the conversion of allantoin (5-ureidohydantoin) to allantoic acid by hydrolytic cleavage of the five-member hydantoin ring.</text>
</comment>
<comment type="catalytic activity">
    <reaction evidence="1">
        <text>(S)-allantoin + H2O = allantoate + H(+)</text>
        <dbReference type="Rhea" id="RHEA:17029"/>
        <dbReference type="ChEBI" id="CHEBI:15377"/>
        <dbReference type="ChEBI" id="CHEBI:15378"/>
        <dbReference type="ChEBI" id="CHEBI:15678"/>
        <dbReference type="ChEBI" id="CHEBI:17536"/>
        <dbReference type="EC" id="3.5.2.5"/>
    </reaction>
</comment>
<comment type="cofactor">
    <cofactor evidence="1">
        <name>Zn(2+)</name>
        <dbReference type="ChEBI" id="CHEBI:29105"/>
    </cofactor>
    <text evidence="1">Binds 2 Zn(2+) ions per subunit.</text>
</comment>
<comment type="pathway">
    <text evidence="1">Nitrogen metabolism; (S)-allantoin degradation; allantoate from (S)-allantoin: step 1/1.</text>
</comment>
<comment type="subunit">
    <text evidence="1">Homotetramer.</text>
</comment>
<comment type="PTM">
    <text evidence="1">Carboxylation allows a single lysine to coordinate two zinc ions.</text>
</comment>
<comment type="similarity">
    <text evidence="1">Belongs to the metallo-dependent hydrolases superfamily. Allantoinase family.</text>
</comment>
<protein>
    <recommendedName>
        <fullName evidence="1">Allantoinase</fullName>
        <ecNumber evidence="1">3.5.2.5</ecNumber>
    </recommendedName>
    <alternativeName>
        <fullName evidence="1">Allantoin-utilizing enzyme</fullName>
    </alternativeName>
</protein>
<proteinExistence type="inferred from homology"/>
<evidence type="ECO:0000255" key="1">
    <source>
        <dbReference type="HAMAP-Rule" id="MF_01645"/>
    </source>
</evidence>
<geneLocation type="plasmid">
    <name>pDGEO01</name>
</geneLocation>
<sequence>MYDLLVRGGQLVREGGVEQADLGVVEERIVEIAPELMGDAREELDARGLHVFPGAVDIHVHFNEPGRTDWEGIRTGSRALVAGGGTVFADMPLNSTPPVLDRTTFEAKQQAAERESYADFALWGGLTPRNLDRLPELAEAGAVGFKAFMSHSGLEEFESPDDFTLYEGMLQARDLGLIVALHAESDAITRGLSTRIRREGGTGVRDYLRSRPAIAEVEAVNRALLLAEETGAKLHLVHLSTGRAVTLAAEARARGVDVSIETCPHYLCFTGEDMERLGAVLKCAPPLRDASEVDALWQAIRAGHIDTIGSDHSPSTLDLKERADFFEVWGGIAGVQSTLTVLLTEGRERGLSLPDIARLSARTPAGHFGLAGKGRLEPGADADLVLVDLDREWVHTPEDLHTRWKFSPYLGRTFRGRVVQTRLRGQTVYAEGRFPHPPQGRFLRPAPAS</sequence>
<dbReference type="EC" id="3.5.2.5" evidence="1"/>
<dbReference type="EMBL" id="CP000358">
    <property type="protein sequence ID" value="ABF44043.1"/>
    <property type="molecule type" value="Genomic_DNA"/>
</dbReference>
<dbReference type="RefSeq" id="WP_011525957.1">
    <property type="nucleotide sequence ID" value="NC_008010.2"/>
</dbReference>
<dbReference type="SMR" id="Q1J391"/>
<dbReference type="KEGG" id="dge:Dgeo_2609"/>
<dbReference type="eggNOG" id="COG0044">
    <property type="taxonomic scope" value="Bacteria"/>
</dbReference>
<dbReference type="HOGENOM" id="CLU_015572_4_2_0"/>
<dbReference type="UniPathway" id="UPA00395">
    <property type="reaction ID" value="UER00653"/>
</dbReference>
<dbReference type="Proteomes" id="UP000002431">
    <property type="component" value="Plasmid pDGEO01"/>
</dbReference>
<dbReference type="GO" id="GO:0005737">
    <property type="term" value="C:cytoplasm"/>
    <property type="evidence" value="ECO:0007669"/>
    <property type="project" value="TreeGrafter"/>
</dbReference>
<dbReference type="GO" id="GO:0004038">
    <property type="term" value="F:allantoinase activity"/>
    <property type="evidence" value="ECO:0007669"/>
    <property type="project" value="UniProtKB-UniRule"/>
</dbReference>
<dbReference type="GO" id="GO:0050897">
    <property type="term" value="F:cobalt ion binding"/>
    <property type="evidence" value="ECO:0007669"/>
    <property type="project" value="InterPro"/>
</dbReference>
<dbReference type="GO" id="GO:0008270">
    <property type="term" value="F:zinc ion binding"/>
    <property type="evidence" value="ECO:0007669"/>
    <property type="project" value="InterPro"/>
</dbReference>
<dbReference type="GO" id="GO:0000256">
    <property type="term" value="P:allantoin catabolic process"/>
    <property type="evidence" value="ECO:0007669"/>
    <property type="project" value="UniProtKB-UniRule"/>
</dbReference>
<dbReference type="GO" id="GO:0006145">
    <property type="term" value="P:purine nucleobase catabolic process"/>
    <property type="evidence" value="ECO:0007669"/>
    <property type="project" value="TreeGrafter"/>
</dbReference>
<dbReference type="Gene3D" id="3.20.20.140">
    <property type="entry name" value="Metal-dependent hydrolases"/>
    <property type="match status" value="1"/>
</dbReference>
<dbReference type="Gene3D" id="2.30.40.10">
    <property type="entry name" value="Urease, subunit C, domain 1"/>
    <property type="match status" value="1"/>
</dbReference>
<dbReference type="HAMAP" id="MF_01645">
    <property type="entry name" value="Hydantoinase"/>
    <property type="match status" value="1"/>
</dbReference>
<dbReference type="InterPro" id="IPR017593">
    <property type="entry name" value="Allantoinase"/>
</dbReference>
<dbReference type="InterPro" id="IPR047604">
    <property type="entry name" value="Allantoinase_bact"/>
</dbReference>
<dbReference type="InterPro" id="IPR006680">
    <property type="entry name" value="Amidohydro-rel"/>
</dbReference>
<dbReference type="InterPro" id="IPR050138">
    <property type="entry name" value="DHOase/Allantoinase_Hydrolase"/>
</dbReference>
<dbReference type="InterPro" id="IPR002195">
    <property type="entry name" value="Dihydroorotase_CS"/>
</dbReference>
<dbReference type="InterPro" id="IPR011059">
    <property type="entry name" value="Metal-dep_hydrolase_composite"/>
</dbReference>
<dbReference type="InterPro" id="IPR032466">
    <property type="entry name" value="Metal_Hydrolase"/>
</dbReference>
<dbReference type="NCBIfam" id="TIGR03178">
    <property type="entry name" value="allantoinase"/>
    <property type="match status" value="1"/>
</dbReference>
<dbReference type="NCBIfam" id="NF004839">
    <property type="entry name" value="PRK06189.1"/>
    <property type="match status" value="1"/>
</dbReference>
<dbReference type="NCBIfam" id="TIGR00857">
    <property type="entry name" value="pyrC_multi"/>
    <property type="match status" value="1"/>
</dbReference>
<dbReference type="PANTHER" id="PTHR43668">
    <property type="entry name" value="ALLANTOINASE"/>
    <property type="match status" value="1"/>
</dbReference>
<dbReference type="PANTHER" id="PTHR43668:SF4">
    <property type="entry name" value="ALLANTOINASE"/>
    <property type="match status" value="1"/>
</dbReference>
<dbReference type="Pfam" id="PF01979">
    <property type="entry name" value="Amidohydro_1"/>
    <property type="match status" value="1"/>
</dbReference>
<dbReference type="SUPFAM" id="SSF51338">
    <property type="entry name" value="Composite domain of metallo-dependent hydrolases"/>
    <property type="match status" value="1"/>
</dbReference>
<dbReference type="SUPFAM" id="SSF51556">
    <property type="entry name" value="Metallo-dependent hydrolases"/>
    <property type="match status" value="1"/>
</dbReference>
<organism>
    <name type="scientific">Deinococcus geothermalis (strain DSM 11300 / CIP 105573 / AG-3a)</name>
    <dbReference type="NCBI Taxonomy" id="319795"/>
    <lineage>
        <taxon>Bacteria</taxon>
        <taxon>Thermotogati</taxon>
        <taxon>Deinococcota</taxon>
        <taxon>Deinococci</taxon>
        <taxon>Deinococcales</taxon>
        <taxon>Deinococcaceae</taxon>
        <taxon>Deinococcus</taxon>
    </lineage>
</organism>